<reference key="1">
    <citation type="journal article" date="2004" name="Science">
        <title>The 1.2-megabase genome sequence of Mimivirus.</title>
        <authorList>
            <person name="Raoult D."/>
            <person name="Audic S."/>
            <person name="Robert C."/>
            <person name="Abergel C."/>
            <person name="Renesto P."/>
            <person name="Ogata H."/>
            <person name="La Scola B."/>
            <person name="Susan M."/>
            <person name="Claverie J.-M."/>
        </authorList>
    </citation>
    <scope>NUCLEOTIDE SEQUENCE [LARGE SCALE GENOMIC DNA]</scope>
    <source>
        <strain>Rowbotham-Bradford</strain>
    </source>
</reference>
<protein>
    <recommendedName>
        <fullName>Uncharacterized protein R820</fullName>
    </recommendedName>
</protein>
<dbReference type="EMBL" id="AY653733">
    <property type="protein sequence ID" value="AAV51080.1"/>
    <property type="molecule type" value="Genomic_DNA"/>
</dbReference>
<dbReference type="KEGG" id="vg:9925483"/>
<dbReference type="Proteomes" id="UP000001134">
    <property type="component" value="Genome"/>
</dbReference>
<organism>
    <name type="scientific">Acanthamoeba polyphaga mimivirus</name>
    <name type="common">APMV</name>
    <dbReference type="NCBI Taxonomy" id="212035"/>
    <lineage>
        <taxon>Viruses</taxon>
        <taxon>Varidnaviria</taxon>
        <taxon>Bamfordvirae</taxon>
        <taxon>Nucleocytoviricota</taxon>
        <taxon>Megaviricetes</taxon>
        <taxon>Imitervirales</taxon>
        <taxon>Mimiviridae</taxon>
        <taxon>Megamimivirinae</taxon>
        <taxon>Mimivirus</taxon>
        <taxon>Mimivirus bradfordmassiliense</taxon>
    </lineage>
</organism>
<sequence length="120" mass="13868">MSFFESGSMDVSSFDLTLLVLHVWQYTGYSNKYICDTLPKGKQLGIPNFKKLQRKLKSKNKFIGTLEGKILNLDLSNPHRFNTCEYNSQHGKNQLESIVRMAGSPQSLKIREDEFREMCE</sequence>
<organismHost>
    <name type="scientific">Acanthamoeba polyphaga</name>
    <name type="common">Amoeba</name>
    <dbReference type="NCBI Taxonomy" id="5757"/>
</organismHost>
<feature type="chain" id="PRO_0000071367" description="Uncharacterized protein R820">
    <location>
        <begin position="1"/>
        <end position="120"/>
    </location>
</feature>
<accession>Q5UQH7</accession>
<gene>
    <name type="ordered locus">MIMI_R820</name>
</gene>
<keyword id="KW-1185">Reference proteome</keyword>
<name>YR820_MIMIV</name>
<proteinExistence type="predicted"/>